<name>YFCP_ECOLI</name>
<accession>P76499</accession>
<accession>Q2MAL6</accession>
<protein>
    <recommendedName>
        <fullName>Uncharacterized fimbrial-like protein YfcP</fullName>
    </recommendedName>
</protein>
<sequence length="179" mass="18951">MNKSMIQSGGYVLLAGLILAMSSTLFAADNNLHFSGNLLSKSCALVVDGQYLAEVRFPTVSRQDLNVAGQSARVPVVFKLKDCKGPAGYNVKVTLTGVEDSEQPGFLALDTSSTAQGVGIGMEKTDGMQVAINNTNGATFALTNGNNDINFRAWLQAKSGRDVTIGEFTASLTATFEYI</sequence>
<keyword id="KW-1015">Disulfide bond</keyword>
<keyword id="KW-0281">Fimbrium</keyword>
<keyword id="KW-1185">Reference proteome</keyword>
<keyword id="KW-0732">Signal</keyword>
<organism>
    <name type="scientific">Escherichia coli (strain K12)</name>
    <dbReference type="NCBI Taxonomy" id="83333"/>
    <lineage>
        <taxon>Bacteria</taxon>
        <taxon>Pseudomonadati</taxon>
        <taxon>Pseudomonadota</taxon>
        <taxon>Gammaproteobacteria</taxon>
        <taxon>Enterobacterales</taxon>
        <taxon>Enterobacteriaceae</taxon>
        <taxon>Escherichia</taxon>
    </lineage>
</organism>
<proteinExistence type="evidence at transcript level"/>
<gene>
    <name type="primary">yfcP</name>
    <name type="ordered locus">b2333</name>
    <name type="ordered locus">JW2330</name>
</gene>
<feature type="signal peptide" evidence="1">
    <location>
        <begin position="1"/>
        <end position="27"/>
    </location>
</feature>
<feature type="chain" id="PRO_0000009256" description="Uncharacterized fimbrial-like protein YfcP">
    <location>
        <begin position="28"/>
        <end position="179"/>
    </location>
</feature>
<feature type="disulfide bond" evidence="1">
    <location>
        <begin position="43"/>
        <end position="83"/>
    </location>
</feature>
<comment type="function">
    <text evidence="2">Part of the yfcOPQRSUV fimbrial operon. Could contribute to adhesion to various surfaces in specific environmental niches. Increases adhesion to eukaryotic T24 bladder epithelial cells in the absence of fim genes.</text>
</comment>
<comment type="subcellular location">
    <subcellularLocation>
        <location evidence="3">Fimbrium</location>
    </subcellularLocation>
</comment>
<comment type="induction">
    <text evidence="2">Expression is negatively regulated by H-NS and subjected to cAMP receptor protein (CRP)-mediated catabolite repression.</text>
</comment>
<comment type="disruption phenotype">
    <text evidence="2">Deletion of the operon under classical laboratory conditions does not result in any major effect on E.coli capacity to form biofilms compared with the wild-type strain.</text>
</comment>
<comment type="miscellaneous">
    <text evidence="4">The operon is cryptic under classical laboratory conditions, but is functional when constitutively expressed.</text>
</comment>
<comment type="similarity">
    <text evidence="3">Belongs to the fimbrial protein family.</text>
</comment>
<reference key="1">
    <citation type="journal article" date="1997" name="Science">
        <title>The complete genome sequence of Escherichia coli K-12.</title>
        <authorList>
            <person name="Blattner F.R."/>
            <person name="Plunkett G. III"/>
            <person name="Bloch C.A."/>
            <person name="Perna N.T."/>
            <person name="Burland V."/>
            <person name="Riley M."/>
            <person name="Collado-Vides J."/>
            <person name="Glasner J.D."/>
            <person name="Rode C.K."/>
            <person name="Mayhew G.F."/>
            <person name="Gregor J."/>
            <person name="Davis N.W."/>
            <person name="Kirkpatrick H.A."/>
            <person name="Goeden M.A."/>
            <person name="Rose D.J."/>
            <person name="Mau B."/>
            <person name="Shao Y."/>
        </authorList>
    </citation>
    <scope>NUCLEOTIDE SEQUENCE [LARGE SCALE GENOMIC DNA]</scope>
    <source>
        <strain>K12 / MG1655 / ATCC 47076</strain>
    </source>
</reference>
<reference key="2">
    <citation type="journal article" date="2006" name="Mol. Syst. Biol.">
        <title>Highly accurate genome sequences of Escherichia coli K-12 strains MG1655 and W3110.</title>
        <authorList>
            <person name="Hayashi K."/>
            <person name="Morooka N."/>
            <person name="Yamamoto Y."/>
            <person name="Fujita K."/>
            <person name="Isono K."/>
            <person name="Choi S."/>
            <person name="Ohtsubo E."/>
            <person name="Baba T."/>
            <person name="Wanner B.L."/>
            <person name="Mori H."/>
            <person name="Horiuchi T."/>
        </authorList>
    </citation>
    <scope>NUCLEOTIDE SEQUENCE [LARGE SCALE GENOMIC DNA]</scope>
    <source>
        <strain>K12 / W3110 / ATCC 27325 / DSM 5911</strain>
    </source>
</reference>
<reference key="3">
    <citation type="journal article" date="2010" name="Environ. Microbiol.">
        <title>Escherichia coli K-12 possesses multiple cryptic but functional chaperone-usher fimbriae with distinct surface specificities.</title>
        <authorList>
            <person name="Korea C.G."/>
            <person name="Badouraly R."/>
            <person name="Prevost M.C."/>
            <person name="Ghigo J.M."/>
            <person name="Beloin C."/>
        </authorList>
    </citation>
    <scope>FUNCTION</scope>
    <scope>INDUCTION</scope>
    <scope>DISRUPTION PHENOTYPE</scope>
    <source>
        <strain>K12 / MG1655 / ATCC 47076</strain>
    </source>
</reference>
<evidence type="ECO:0000255" key="1"/>
<evidence type="ECO:0000269" key="2">
    <source>
    </source>
</evidence>
<evidence type="ECO:0000305" key="3"/>
<evidence type="ECO:0000305" key="4">
    <source>
    </source>
</evidence>
<dbReference type="EMBL" id="U00096">
    <property type="protein sequence ID" value="AAC75393.1"/>
    <property type="molecule type" value="Genomic_DNA"/>
</dbReference>
<dbReference type="EMBL" id="AP009048">
    <property type="protein sequence ID" value="BAE76690.1"/>
    <property type="molecule type" value="Genomic_DNA"/>
</dbReference>
<dbReference type="PIR" id="C65006">
    <property type="entry name" value="C65006"/>
</dbReference>
<dbReference type="RefSeq" id="NP_416836.1">
    <property type="nucleotide sequence ID" value="NC_000913.3"/>
</dbReference>
<dbReference type="RefSeq" id="WP_001043398.1">
    <property type="nucleotide sequence ID" value="NZ_LN832404.1"/>
</dbReference>
<dbReference type="SMR" id="P76499"/>
<dbReference type="BioGRID" id="4259569">
    <property type="interactions" value="11"/>
</dbReference>
<dbReference type="FunCoup" id="P76499">
    <property type="interactions" value="159"/>
</dbReference>
<dbReference type="STRING" id="511145.b2333"/>
<dbReference type="PaxDb" id="511145-b2333"/>
<dbReference type="EnsemblBacteria" id="AAC75393">
    <property type="protein sequence ID" value="AAC75393"/>
    <property type="gene ID" value="b2333"/>
</dbReference>
<dbReference type="GeneID" id="946788"/>
<dbReference type="KEGG" id="ecj:JW2330"/>
<dbReference type="KEGG" id="eco:b2333"/>
<dbReference type="KEGG" id="ecoc:C3026_12995"/>
<dbReference type="PATRIC" id="fig|1411691.4.peg.4399"/>
<dbReference type="EchoBASE" id="EB3872"/>
<dbReference type="eggNOG" id="COG3539">
    <property type="taxonomic scope" value="Bacteria"/>
</dbReference>
<dbReference type="HOGENOM" id="CLU_088965_3_3_6"/>
<dbReference type="InParanoid" id="P76499"/>
<dbReference type="OMA" id="CKGPAEY"/>
<dbReference type="OrthoDB" id="6593132at2"/>
<dbReference type="PhylomeDB" id="P76499"/>
<dbReference type="BioCyc" id="EcoCyc:G7204-MONOMER"/>
<dbReference type="PRO" id="PR:P76499"/>
<dbReference type="Proteomes" id="UP000000625">
    <property type="component" value="Chromosome"/>
</dbReference>
<dbReference type="GO" id="GO:0009289">
    <property type="term" value="C:pilus"/>
    <property type="evidence" value="ECO:0000318"/>
    <property type="project" value="GO_Central"/>
</dbReference>
<dbReference type="GO" id="GO:0007155">
    <property type="term" value="P:cell adhesion"/>
    <property type="evidence" value="ECO:0000315"/>
    <property type="project" value="EcoCyc"/>
</dbReference>
<dbReference type="GO" id="GO:0043709">
    <property type="term" value="P:cell adhesion involved in single-species biofilm formation"/>
    <property type="evidence" value="ECO:0000318"/>
    <property type="project" value="GO_Central"/>
</dbReference>
<dbReference type="FunFam" id="2.60.40.1090:FF:000012">
    <property type="entry name" value="Minor fimbrial subunit StfG"/>
    <property type="match status" value="1"/>
</dbReference>
<dbReference type="Gene3D" id="2.60.40.1090">
    <property type="entry name" value="Fimbrial-type adhesion domain"/>
    <property type="match status" value="1"/>
</dbReference>
<dbReference type="InterPro" id="IPR000259">
    <property type="entry name" value="Adhesion_dom_fimbrial"/>
</dbReference>
<dbReference type="InterPro" id="IPR036937">
    <property type="entry name" value="Adhesion_dom_fimbrial_sf"/>
</dbReference>
<dbReference type="InterPro" id="IPR008966">
    <property type="entry name" value="Adhesion_dom_sf"/>
</dbReference>
<dbReference type="InterPro" id="IPR050263">
    <property type="entry name" value="Bact_Fimbrial_Adh_Pro"/>
</dbReference>
<dbReference type="PANTHER" id="PTHR33420">
    <property type="entry name" value="FIMBRIAL SUBUNIT ELFA-RELATED"/>
    <property type="match status" value="1"/>
</dbReference>
<dbReference type="PANTHER" id="PTHR33420:SF9">
    <property type="entry name" value="MINOR FIMBRIAL SUBUNIT"/>
    <property type="match status" value="1"/>
</dbReference>
<dbReference type="Pfam" id="PF00419">
    <property type="entry name" value="Fimbrial"/>
    <property type="match status" value="1"/>
</dbReference>
<dbReference type="SUPFAM" id="SSF49401">
    <property type="entry name" value="Bacterial adhesins"/>
    <property type="match status" value="1"/>
</dbReference>